<feature type="chain" id="PRO_0000370269" description="Uncharacterized protein YwsA">
    <location>
        <begin position="1"/>
        <end position="98"/>
    </location>
</feature>
<sequence length="98" mass="11086">MDQFEAAYESYKARQTTADQENVPSGKEEIIAVRRNEEDNIIAVKTNTGRELDYPTALSEAKSGKLAHVDVFHKYGRDILRSEPDGIKENNLSELPDF</sequence>
<name>YWSA_BACSU</name>
<proteinExistence type="predicted"/>
<dbReference type="EMBL" id="AL009126">
    <property type="protein sequence ID" value="CAB15615.1"/>
    <property type="molecule type" value="Genomic_DNA"/>
</dbReference>
<dbReference type="EMBL" id="Z92953">
    <property type="protein sequence ID" value="CAB07459.1"/>
    <property type="molecule type" value="Genomic_DNA"/>
</dbReference>
<dbReference type="PIR" id="D70069">
    <property type="entry name" value="D70069"/>
</dbReference>
<dbReference type="RefSeq" id="NP_391479.1">
    <property type="nucleotide sequence ID" value="NC_000964.3"/>
</dbReference>
<dbReference type="RefSeq" id="WP_003243460.1">
    <property type="nucleotide sequence ID" value="NZ_OZ025638.1"/>
</dbReference>
<dbReference type="FunCoup" id="P96728">
    <property type="interactions" value="45"/>
</dbReference>
<dbReference type="STRING" id="224308.BSU35980"/>
<dbReference type="PaxDb" id="224308-BSU35980"/>
<dbReference type="EnsemblBacteria" id="CAB15615">
    <property type="protein sequence ID" value="CAB15615"/>
    <property type="gene ID" value="BSU_35980"/>
</dbReference>
<dbReference type="GeneID" id="936847"/>
<dbReference type="KEGG" id="bsu:BSU35980"/>
<dbReference type="PATRIC" id="fig|224308.179.peg.3895"/>
<dbReference type="eggNOG" id="ENOG503301W">
    <property type="taxonomic scope" value="Bacteria"/>
</dbReference>
<dbReference type="InParanoid" id="P96728"/>
<dbReference type="OrthoDB" id="1647761at2"/>
<dbReference type="BioCyc" id="BSUB:BSU35980-MONOMER"/>
<dbReference type="Proteomes" id="UP000001570">
    <property type="component" value="Chromosome"/>
</dbReference>
<dbReference type="InterPro" id="IPR024997">
    <property type="entry name" value="DUF3892"/>
</dbReference>
<dbReference type="Pfam" id="PF13031">
    <property type="entry name" value="DUF3892"/>
    <property type="match status" value="1"/>
</dbReference>
<reference key="1">
    <citation type="journal article" date="1997" name="Nature">
        <title>The complete genome sequence of the Gram-positive bacterium Bacillus subtilis.</title>
        <authorList>
            <person name="Kunst F."/>
            <person name="Ogasawara N."/>
            <person name="Moszer I."/>
            <person name="Albertini A.M."/>
            <person name="Alloni G."/>
            <person name="Azevedo V."/>
            <person name="Bertero M.G."/>
            <person name="Bessieres P."/>
            <person name="Bolotin A."/>
            <person name="Borchert S."/>
            <person name="Borriss R."/>
            <person name="Boursier L."/>
            <person name="Brans A."/>
            <person name="Braun M."/>
            <person name="Brignell S.C."/>
            <person name="Bron S."/>
            <person name="Brouillet S."/>
            <person name="Bruschi C.V."/>
            <person name="Caldwell B."/>
            <person name="Capuano V."/>
            <person name="Carter N.M."/>
            <person name="Choi S.-K."/>
            <person name="Codani J.-J."/>
            <person name="Connerton I.F."/>
            <person name="Cummings N.J."/>
            <person name="Daniel R.A."/>
            <person name="Denizot F."/>
            <person name="Devine K.M."/>
            <person name="Duesterhoeft A."/>
            <person name="Ehrlich S.D."/>
            <person name="Emmerson P.T."/>
            <person name="Entian K.-D."/>
            <person name="Errington J."/>
            <person name="Fabret C."/>
            <person name="Ferrari E."/>
            <person name="Foulger D."/>
            <person name="Fritz C."/>
            <person name="Fujita M."/>
            <person name="Fujita Y."/>
            <person name="Fuma S."/>
            <person name="Galizzi A."/>
            <person name="Galleron N."/>
            <person name="Ghim S.-Y."/>
            <person name="Glaser P."/>
            <person name="Goffeau A."/>
            <person name="Golightly E.J."/>
            <person name="Grandi G."/>
            <person name="Guiseppi G."/>
            <person name="Guy B.J."/>
            <person name="Haga K."/>
            <person name="Haiech J."/>
            <person name="Harwood C.R."/>
            <person name="Henaut A."/>
            <person name="Hilbert H."/>
            <person name="Holsappel S."/>
            <person name="Hosono S."/>
            <person name="Hullo M.-F."/>
            <person name="Itaya M."/>
            <person name="Jones L.-M."/>
            <person name="Joris B."/>
            <person name="Karamata D."/>
            <person name="Kasahara Y."/>
            <person name="Klaerr-Blanchard M."/>
            <person name="Klein C."/>
            <person name="Kobayashi Y."/>
            <person name="Koetter P."/>
            <person name="Koningstein G."/>
            <person name="Krogh S."/>
            <person name="Kumano M."/>
            <person name="Kurita K."/>
            <person name="Lapidus A."/>
            <person name="Lardinois S."/>
            <person name="Lauber J."/>
            <person name="Lazarevic V."/>
            <person name="Lee S.-M."/>
            <person name="Levine A."/>
            <person name="Liu H."/>
            <person name="Masuda S."/>
            <person name="Mauel C."/>
            <person name="Medigue C."/>
            <person name="Medina N."/>
            <person name="Mellado R.P."/>
            <person name="Mizuno M."/>
            <person name="Moestl D."/>
            <person name="Nakai S."/>
            <person name="Noback M."/>
            <person name="Noone D."/>
            <person name="O'Reilly M."/>
            <person name="Ogawa K."/>
            <person name="Ogiwara A."/>
            <person name="Oudega B."/>
            <person name="Park S.-H."/>
            <person name="Parro V."/>
            <person name="Pohl T.M."/>
            <person name="Portetelle D."/>
            <person name="Porwollik S."/>
            <person name="Prescott A.M."/>
            <person name="Presecan E."/>
            <person name="Pujic P."/>
            <person name="Purnelle B."/>
            <person name="Rapoport G."/>
            <person name="Rey M."/>
            <person name="Reynolds S."/>
            <person name="Rieger M."/>
            <person name="Rivolta C."/>
            <person name="Rocha E."/>
            <person name="Roche B."/>
            <person name="Rose M."/>
            <person name="Sadaie Y."/>
            <person name="Sato T."/>
            <person name="Scanlan E."/>
            <person name="Schleich S."/>
            <person name="Schroeter R."/>
            <person name="Scoffone F."/>
            <person name="Sekiguchi J."/>
            <person name="Sekowska A."/>
            <person name="Seror S.J."/>
            <person name="Serror P."/>
            <person name="Shin B.-S."/>
            <person name="Soldo B."/>
            <person name="Sorokin A."/>
            <person name="Tacconi E."/>
            <person name="Takagi T."/>
            <person name="Takahashi H."/>
            <person name="Takemaru K."/>
            <person name="Takeuchi M."/>
            <person name="Tamakoshi A."/>
            <person name="Tanaka T."/>
            <person name="Terpstra P."/>
            <person name="Tognoni A."/>
            <person name="Tosato V."/>
            <person name="Uchiyama S."/>
            <person name="Vandenbol M."/>
            <person name="Vannier F."/>
            <person name="Vassarotti A."/>
            <person name="Viari A."/>
            <person name="Wambutt R."/>
            <person name="Wedler E."/>
            <person name="Wedler H."/>
            <person name="Weitzenegger T."/>
            <person name="Winters P."/>
            <person name="Wipat A."/>
            <person name="Yamamoto H."/>
            <person name="Yamane K."/>
            <person name="Yasumoto K."/>
            <person name="Yata K."/>
            <person name="Yoshida K."/>
            <person name="Yoshikawa H.-F."/>
            <person name="Zumstein E."/>
            <person name="Yoshikawa H."/>
            <person name="Danchin A."/>
        </authorList>
    </citation>
    <scope>NUCLEOTIDE SEQUENCE [LARGE SCALE GENOMIC DNA]</scope>
    <source>
        <strain>168</strain>
    </source>
</reference>
<reference key="2">
    <citation type="journal article" date="1997" name="Microbiology">
        <title>The Bacillus subtilis genome from gerBC (311 degrees) to licR (334 degrees).</title>
        <authorList>
            <person name="Presecan E."/>
            <person name="Moszer I."/>
            <person name="Boursier L."/>
            <person name="Cruz Ramos H."/>
            <person name="De La Fuente V."/>
            <person name="Hullo M.-F."/>
            <person name="Lelong C."/>
            <person name="Schleich S."/>
            <person name="Sekowska A."/>
            <person name="Song B.H."/>
            <person name="Villani G."/>
            <person name="Kunst F."/>
            <person name="Danchin A."/>
            <person name="Glaser P."/>
        </authorList>
    </citation>
    <scope>NUCLEOTIDE SEQUENCE [GENOMIC DNA] OF 1-71</scope>
    <source>
        <strain>168</strain>
    </source>
</reference>
<gene>
    <name type="primary">ywsA</name>
    <name type="ordered locus">BSU35980</name>
</gene>
<protein>
    <recommendedName>
        <fullName>Uncharacterized protein YwsA</fullName>
    </recommendedName>
</protein>
<organism>
    <name type="scientific">Bacillus subtilis (strain 168)</name>
    <dbReference type="NCBI Taxonomy" id="224308"/>
    <lineage>
        <taxon>Bacteria</taxon>
        <taxon>Bacillati</taxon>
        <taxon>Bacillota</taxon>
        <taxon>Bacilli</taxon>
        <taxon>Bacillales</taxon>
        <taxon>Bacillaceae</taxon>
        <taxon>Bacillus</taxon>
    </lineage>
</organism>
<accession>P96728</accession>
<accession>Q798J4</accession>
<keyword id="KW-1185">Reference proteome</keyword>